<proteinExistence type="evidence at transcript level"/>
<dbReference type="EMBL" id="Z97337">
    <property type="status" value="NOT_ANNOTATED_CDS"/>
    <property type="molecule type" value="Genomic_DNA"/>
</dbReference>
<dbReference type="EMBL" id="AL161540">
    <property type="status" value="NOT_ANNOTATED_CDS"/>
    <property type="molecule type" value="Genomic_DNA"/>
</dbReference>
<dbReference type="EMBL" id="CP002687">
    <property type="protein sequence ID" value="AEE83518.1"/>
    <property type="molecule type" value="Genomic_DNA"/>
</dbReference>
<dbReference type="EMBL" id="CP002687">
    <property type="protein sequence ID" value="AEE83519.1"/>
    <property type="molecule type" value="Genomic_DNA"/>
</dbReference>
<dbReference type="EMBL" id="AK117987">
    <property type="protein sequence ID" value="BAC42622.1"/>
    <property type="molecule type" value="mRNA"/>
</dbReference>
<dbReference type="EMBL" id="BT005320">
    <property type="protein sequence ID" value="AAO63384.1"/>
    <property type="molecule type" value="mRNA"/>
</dbReference>
<dbReference type="EMBL" id="AK226207">
    <property type="protein sequence ID" value="BAE98372.1"/>
    <property type="molecule type" value="mRNA"/>
</dbReference>
<dbReference type="RefSeq" id="NP_849387.1">
    <property type="nucleotide sequence ID" value="NM_179056.6"/>
</dbReference>
<dbReference type="RefSeq" id="NP_974550.1">
    <property type="nucleotide sequence ID" value="NM_202821.6"/>
</dbReference>
<dbReference type="SMR" id="Q8GXX4"/>
<dbReference type="FunCoup" id="Q8GXX4">
    <property type="interactions" value="2"/>
</dbReference>
<dbReference type="PaxDb" id="3702-AT4G14905.2"/>
<dbReference type="EnsemblPlants" id="AT4G14905.1">
    <property type="protein sequence ID" value="AT4G14905.1"/>
    <property type="gene ID" value="AT4G14905"/>
</dbReference>
<dbReference type="EnsemblPlants" id="AT4G14905.2">
    <property type="protein sequence ID" value="AT4G14905.2"/>
    <property type="gene ID" value="AT4G14905"/>
</dbReference>
<dbReference type="GeneID" id="827148"/>
<dbReference type="Gramene" id="AT4G14905.1">
    <property type="protein sequence ID" value="AT4G14905.1"/>
    <property type="gene ID" value="AT4G14905"/>
</dbReference>
<dbReference type="Gramene" id="AT4G14905.2">
    <property type="protein sequence ID" value="AT4G14905.2"/>
    <property type="gene ID" value="AT4G14905"/>
</dbReference>
<dbReference type="KEGG" id="ath:AT4G14905"/>
<dbReference type="Araport" id="AT4G14905"/>
<dbReference type="TAIR" id="AT4G14905"/>
<dbReference type="eggNOG" id="KOG1072">
    <property type="taxonomic scope" value="Eukaryota"/>
</dbReference>
<dbReference type="HOGENOM" id="CLU_032521_1_2_1"/>
<dbReference type="InParanoid" id="Q8GXX4"/>
<dbReference type="OMA" id="ASPEIYI"/>
<dbReference type="PhylomeDB" id="Q8GXX4"/>
<dbReference type="PRO" id="PR:Q8GXX4"/>
<dbReference type="Proteomes" id="UP000006548">
    <property type="component" value="Chromosome 4"/>
</dbReference>
<dbReference type="ExpressionAtlas" id="Q8GXX4">
    <property type="expression patterns" value="baseline and differential"/>
</dbReference>
<dbReference type="CDD" id="cd22152">
    <property type="entry name" value="F-box_AtAFR-like"/>
    <property type="match status" value="1"/>
</dbReference>
<dbReference type="Gene3D" id="2.120.10.80">
    <property type="entry name" value="Kelch-type beta propeller"/>
    <property type="match status" value="1"/>
</dbReference>
<dbReference type="InterPro" id="IPR050354">
    <property type="entry name" value="F-box/kelch-repeat_ARATH"/>
</dbReference>
<dbReference type="InterPro" id="IPR001810">
    <property type="entry name" value="F-box_dom"/>
</dbReference>
<dbReference type="InterPro" id="IPR015915">
    <property type="entry name" value="Kelch-typ_b-propeller"/>
</dbReference>
<dbReference type="InterPro" id="IPR006652">
    <property type="entry name" value="Kelch_1"/>
</dbReference>
<dbReference type="PANTHER" id="PTHR24414:SF78">
    <property type="entry name" value="F-BOX DOMAIN-CONTAINING PROTEIN"/>
    <property type="match status" value="1"/>
</dbReference>
<dbReference type="PANTHER" id="PTHR24414">
    <property type="entry name" value="F-BOX/KELCH-REPEAT PROTEIN SKIP4"/>
    <property type="match status" value="1"/>
</dbReference>
<dbReference type="Pfam" id="PF00646">
    <property type="entry name" value="F-box"/>
    <property type="match status" value="1"/>
</dbReference>
<dbReference type="Pfam" id="PF25210">
    <property type="entry name" value="Kelch_FKB95"/>
    <property type="match status" value="1"/>
</dbReference>
<dbReference type="SMART" id="SM00612">
    <property type="entry name" value="Kelch"/>
    <property type="match status" value="2"/>
</dbReference>
<dbReference type="SUPFAM" id="SSF117281">
    <property type="entry name" value="Kelch motif"/>
    <property type="match status" value="1"/>
</dbReference>
<accession>Q8GXX4</accession>
<accession>Q0WWX6</accession>
<gene>
    <name type="ordered locus">At4g14905</name>
    <name type="ORF">FCAALL</name>
</gene>
<feature type="chain" id="PRO_0000396075" description="F-box/kelch-repeat protein At4g14905">
    <location>
        <begin position="1"/>
        <end position="372"/>
    </location>
</feature>
<feature type="domain" description="F-box">
    <location>
        <begin position="34"/>
        <end position="74"/>
    </location>
</feature>
<feature type="repeat" description="Kelch 1">
    <location>
        <begin position="137"/>
        <end position="183"/>
    </location>
</feature>
<feature type="repeat" description="Kelch 2">
    <location>
        <begin position="184"/>
        <end position="229"/>
    </location>
</feature>
<feature type="repeat" description="Kelch 3">
    <location>
        <begin position="232"/>
        <end position="280"/>
    </location>
</feature>
<organism>
    <name type="scientific">Arabidopsis thaliana</name>
    <name type="common">Mouse-ear cress</name>
    <dbReference type="NCBI Taxonomy" id="3702"/>
    <lineage>
        <taxon>Eukaryota</taxon>
        <taxon>Viridiplantae</taxon>
        <taxon>Streptophyta</taxon>
        <taxon>Embryophyta</taxon>
        <taxon>Tracheophyta</taxon>
        <taxon>Spermatophyta</taxon>
        <taxon>Magnoliopsida</taxon>
        <taxon>eudicotyledons</taxon>
        <taxon>Gunneridae</taxon>
        <taxon>Pentapetalae</taxon>
        <taxon>rosids</taxon>
        <taxon>malvids</taxon>
        <taxon>Brassicales</taxon>
        <taxon>Brassicaceae</taxon>
        <taxon>Camelineae</taxon>
        <taxon>Arabidopsis</taxon>
    </lineage>
</organism>
<keyword id="KW-0880">Kelch repeat</keyword>
<keyword id="KW-1185">Reference proteome</keyword>
<keyword id="KW-0677">Repeat</keyword>
<sequence>MSRSAASSVGSITGESPQKKLLQSASSSSSLAILHDEIAVSCFARVPRCYYPAISLVCRNFRRLMASPEIYIERSVIRRTENILYVAIRSEATKTLSWYTLNLKPFGTTEISHRLVPVPSFPSIPGYGTTIISSGSETYVIGGCIDGELVSTVSVIDCRSHTCRFLPNMKEPRKCAAVGLIDGKLYVVGGCNAPSLSWVEVFNFKKRTWESVLSLDNVDMDEQMNFFVMNDKIYRIGQNTMFVYDPKKGRFEEDLALGRLWFNESCPIDNVLYGFYCMNQILAYDLVVGMGTVFWGLEGLPEGLQSCTGRMVNHGGRLAILFKKSPTEIWRTEIAIERAEEGGYISGKFLWSNHVLTLTDSFIIERALAVTV</sequence>
<reference key="1">
    <citation type="journal article" date="1998" name="Nature">
        <title>Analysis of 1.9 Mb of contiguous sequence from chromosome 4 of Arabidopsis thaliana.</title>
        <authorList>
            <person name="Bevan M."/>
            <person name="Bancroft I."/>
            <person name="Bent E."/>
            <person name="Love K."/>
            <person name="Goodman H.M."/>
            <person name="Dean C."/>
            <person name="Bergkamp R."/>
            <person name="Dirkse W."/>
            <person name="van Staveren M."/>
            <person name="Stiekema W."/>
            <person name="Drost L."/>
            <person name="Ridley P."/>
            <person name="Hudson S.-A."/>
            <person name="Patel K."/>
            <person name="Murphy G."/>
            <person name="Piffanelli P."/>
            <person name="Wedler H."/>
            <person name="Wedler E."/>
            <person name="Wambutt R."/>
            <person name="Weitzenegger T."/>
            <person name="Pohl T."/>
            <person name="Terryn N."/>
            <person name="Gielen J."/>
            <person name="Villarroel R."/>
            <person name="De Clercq R."/>
            <person name="van Montagu M."/>
            <person name="Lecharny A."/>
            <person name="Aubourg S."/>
            <person name="Gy I."/>
            <person name="Kreis M."/>
            <person name="Lao N."/>
            <person name="Kavanagh T."/>
            <person name="Hempel S."/>
            <person name="Kotter P."/>
            <person name="Entian K.-D."/>
            <person name="Rieger M."/>
            <person name="Schaefer M."/>
            <person name="Funk B."/>
            <person name="Mueller-Auer S."/>
            <person name="Silvey M."/>
            <person name="James R."/>
            <person name="Monfort A."/>
            <person name="Pons A."/>
            <person name="Puigdomenech P."/>
            <person name="Douka A."/>
            <person name="Voukelatou E."/>
            <person name="Milioni D."/>
            <person name="Hatzopoulos P."/>
            <person name="Piravandi E."/>
            <person name="Obermaier B."/>
            <person name="Hilbert H."/>
            <person name="Duesterhoeft A."/>
            <person name="Moores T."/>
            <person name="Jones J.D.G."/>
            <person name="Eneva T."/>
            <person name="Palme K."/>
            <person name="Benes V."/>
            <person name="Rechmann S."/>
            <person name="Ansorge W."/>
            <person name="Cooke R."/>
            <person name="Berger C."/>
            <person name="Delseny M."/>
            <person name="Voet M."/>
            <person name="Volckaert G."/>
            <person name="Mewes H.-W."/>
            <person name="Klosterman S."/>
            <person name="Schueller C."/>
            <person name="Chalwatzis N."/>
        </authorList>
    </citation>
    <scope>NUCLEOTIDE SEQUENCE [LARGE SCALE GENOMIC DNA]</scope>
    <source>
        <strain>cv. Columbia</strain>
    </source>
</reference>
<reference key="2">
    <citation type="journal article" date="1999" name="Nature">
        <title>Sequence and analysis of chromosome 4 of the plant Arabidopsis thaliana.</title>
        <authorList>
            <person name="Mayer K.F.X."/>
            <person name="Schueller C."/>
            <person name="Wambutt R."/>
            <person name="Murphy G."/>
            <person name="Volckaert G."/>
            <person name="Pohl T."/>
            <person name="Duesterhoeft A."/>
            <person name="Stiekema W."/>
            <person name="Entian K.-D."/>
            <person name="Terryn N."/>
            <person name="Harris B."/>
            <person name="Ansorge W."/>
            <person name="Brandt P."/>
            <person name="Grivell L.A."/>
            <person name="Rieger M."/>
            <person name="Weichselgartner M."/>
            <person name="de Simone V."/>
            <person name="Obermaier B."/>
            <person name="Mache R."/>
            <person name="Mueller M."/>
            <person name="Kreis M."/>
            <person name="Delseny M."/>
            <person name="Puigdomenech P."/>
            <person name="Watson M."/>
            <person name="Schmidtheini T."/>
            <person name="Reichert B."/>
            <person name="Portetelle D."/>
            <person name="Perez-Alonso M."/>
            <person name="Boutry M."/>
            <person name="Bancroft I."/>
            <person name="Vos P."/>
            <person name="Hoheisel J."/>
            <person name="Zimmermann W."/>
            <person name="Wedler H."/>
            <person name="Ridley P."/>
            <person name="Langham S.-A."/>
            <person name="McCullagh B."/>
            <person name="Bilham L."/>
            <person name="Robben J."/>
            <person name="van der Schueren J."/>
            <person name="Grymonprez B."/>
            <person name="Chuang Y.-J."/>
            <person name="Vandenbussche F."/>
            <person name="Braeken M."/>
            <person name="Weltjens I."/>
            <person name="Voet M."/>
            <person name="Bastiaens I."/>
            <person name="Aert R."/>
            <person name="Defoor E."/>
            <person name="Weitzenegger T."/>
            <person name="Bothe G."/>
            <person name="Ramsperger U."/>
            <person name="Hilbert H."/>
            <person name="Braun M."/>
            <person name="Holzer E."/>
            <person name="Brandt A."/>
            <person name="Peters S."/>
            <person name="van Staveren M."/>
            <person name="Dirkse W."/>
            <person name="Mooijman P."/>
            <person name="Klein Lankhorst R."/>
            <person name="Rose M."/>
            <person name="Hauf J."/>
            <person name="Koetter P."/>
            <person name="Berneiser S."/>
            <person name="Hempel S."/>
            <person name="Feldpausch M."/>
            <person name="Lamberth S."/>
            <person name="Van den Daele H."/>
            <person name="De Keyser A."/>
            <person name="Buysshaert C."/>
            <person name="Gielen J."/>
            <person name="Villarroel R."/>
            <person name="De Clercq R."/>
            <person name="van Montagu M."/>
            <person name="Rogers J."/>
            <person name="Cronin A."/>
            <person name="Quail M.A."/>
            <person name="Bray-Allen S."/>
            <person name="Clark L."/>
            <person name="Doggett J."/>
            <person name="Hall S."/>
            <person name="Kay M."/>
            <person name="Lennard N."/>
            <person name="McLay K."/>
            <person name="Mayes R."/>
            <person name="Pettett A."/>
            <person name="Rajandream M.A."/>
            <person name="Lyne M."/>
            <person name="Benes V."/>
            <person name="Rechmann S."/>
            <person name="Borkova D."/>
            <person name="Bloecker H."/>
            <person name="Scharfe M."/>
            <person name="Grimm M."/>
            <person name="Loehnert T.-H."/>
            <person name="Dose S."/>
            <person name="de Haan M."/>
            <person name="Maarse A.C."/>
            <person name="Schaefer M."/>
            <person name="Mueller-Auer S."/>
            <person name="Gabel C."/>
            <person name="Fuchs M."/>
            <person name="Fartmann B."/>
            <person name="Granderath K."/>
            <person name="Dauner D."/>
            <person name="Herzl A."/>
            <person name="Neumann S."/>
            <person name="Argiriou A."/>
            <person name="Vitale D."/>
            <person name="Liguori R."/>
            <person name="Piravandi E."/>
            <person name="Massenet O."/>
            <person name="Quigley F."/>
            <person name="Clabauld G."/>
            <person name="Muendlein A."/>
            <person name="Felber R."/>
            <person name="Schnabl S."/>
            <person name="Hiller R."/>
            <person name="Schmidt W."/>
            <person name="Lecharny A."/>
            <person name="Aubourg S."/>
            <person name="Chefdor F."/>
            <person name="Cooke R."/>
            <person name="Berger C."/>
            <person name="Monfort A."/>
            <person name="Casacuberta E."/>
            <person name="Gibbons T."/>
            <person name="Weber N."/>
            <person name="Vandenbol M."/>
            <person name="Bargues M."/>
            <person name="Terol J."/>
            <person name="Torres A."/>
            <person name="Perez-Perez A."/>
            <person name="Purnelle B."/>
            <person name="Bent E."/>
            <person name="Johnson S."/>
            <person name="Tacon D."/>
            <person name="Jesse T."/>
            <person name="Heijnen L."/>
            <person name="Schwarz S."/>
            <person name="Scholler P."/>
            <person name="Heber S."/>
            <person name="Francs P."/>
            <person name="Bielke C."/>
            <person name="Frishman D."/>
            <person name="Haase D."/>
            <person name="Lemcke K."/>
            <person name="Mewes H.-W."/>
            <person name="Stocker S."/>
            <person name="Zaccaria P."/>
            <person name="Bevan M."/>
            <person name="Wilson R.K."/>
            <person name="de la Bastide M."/>
            <person name="Habermann K."/>
            <person name="Parnell L."/>
            <person name="Dedhia N."/>
            <person name="Gnoj L."/>
            <person name="Schutz K."/>
            <person name="Huang E."/>
            <person name="Spiegel L."/>
            <person name="Sekhon M."/>
            <person name="Murray J."/>
            <person name="Sheet P."/>
            <person name="Cordes M."/>
            <person name="Abu-Threideh J."/>
            <person name="Stoneking T."/>
            <person name="Kalicki J."/>
            <person name="Graves T."/>
            <person name="Harmon G."/>
            <person name="Edwards J."/>
            <person name="Latreille P."/>
            <person name="Courtney L."/>
            <person name="Cloud J."/>
            <person name="Abbott A."/>
            <person name="Scott K."/>
            <person name="Johnson D."/>
            <person name="Minx P."/>
            <person name="Bentley D."/>
            <person name="Fulton B."/>
            <person name="Miller N."/>
            <person name="Greco T."/>
            <person name="Kemp K."/>
            <person name="Kramer J."/>
            <person name="Fulton L."/>
            <person name="Mardis E."/>
            <person name="Dante M."/>
            <person name="Pepin K."/>
            <person name="Hillier L.W."/>
            <person name="Nelson J."/>
            <person name="Spieth J."/>
            <person name="Ryan E."/>
            <person name="Andrews S."/>
            <person name="Geisel C."/>
            <person name="Layman D."/>
            <person name="Du H."/>
            <person name="Ali J."/>
            <person name="Berghoff A."/>
            <person name="Jones K."/>
            <person name="Drone K."/>
            <person name="Cotton M."/>
            <person name="Joshu C."/>
            <person name="Antonoiu B."/>
            <person name="Zidanic M."/>
            <person name="Strong C."/>
            <person name="Sun H."/>
            <person name="Lamar B."/>
            <person name="Yordan C."/>
            <person name="Ma P."/>
            <person name="Zhong J."/>
            <person name="Preston R."/>
            <person name="Vil D."/>
            <person name="Shekher M."/>
            <person name="Matero A."/>
            <person name="Shah R."/>
            <person name="Swaby I.K."/>
            <person name="O'Shaughnessy A."/>
            <person name="Rodriguez M."/>
            <person name="Hoffman J."/>
            <person name="Till S."/>
            <person name="Granat S."/>
            <person name="Shohdy N."/>
            <person name="Hasegawa A."/>
            <person name="Hameed A."/>
            <person name="Lodhi M."/>
            <person name="Johnson A."/>
            <person name="Chen E."/>
            <person name="Marra M.A."/>
            <person name="Martienssen R."/>
            <person name="McCombie W.R."/>
        </authorList>
    </citation>
    <scope>NUCLEOTIDE SEQUENCE [LARGE SCALE GENOMIC DNA]</scope>
    <source>
        <strain>cv. Columbia</strain>
    </source>
</reference>
<reference key="3">
    <citation type="journal article" date="2017" name="Plant J.">
        <title>Araport11: a complete reannotation of the Arabidopsis thaliana reference genome.</title>
        <authorList>
            <person name="Cheng C.Y."/>
            <person name="Krishnakumar V."/>
            <person name="Chan A.P."/>
            <person name="Thibaud-Nissen F."/>
            <person name="Schobel S."/>
            <person name="Town C.D."/>
        </authorList>
    </citation>
    <scope>GENOME REANNOTATION</scope>
    <source>
        <strain>cv. Columbia</strain>
    </source>
</reference>
<reference key="4">
    <citation type="journal article" date="2002" name="Science">
        <title>Functional annotation of a full-length Arabidopsis cDNA collection.</title>
        <authorList>
            <person name="Seki M."/>
            <person name="Narusaka M."/>
            <person name="Kamiya A."/>
            <person name="Ishida J."/>
            <person name="Satou M."/>
            <person name="Sakurai T."/>
            <person name="Nakajima M."/>
            <person name="Enju A."/>
            <person name="Akiyama K."/>
            <person name="Oono Y."/>
            <person name="Muramatsu M."/>
            <person name="Hayashizaki Y."/>
            <person name="Kawai J."/>
            <person name="Carninci P."/>
            <person name="Itoh M."/>
            <person name="Ishii Y."/>
            <person name="Arakawa T."/>
            <person name="Shibata K."/>
            <person name="Shinagawa A."/>
            <person name="Shinozaki K."/>
        </authorList>
    </citation>
    <scope>NUCLEOTIDE SEQUENCE [LARGE SCALE MRNA]</scope>
    <source>
        <strain>cv. Columbia</strain>
    </source>
</reference>
<reference key="5">
    <citation type="journal article" date="2003" name="Science">
        <title>Empirical analysis of transcriptional activity in the Arabidopsis genome.</title>
        <authorList>
            <person name="Yamada K."/>
            <person name="Lim J."/>
            <person name="Dale J.M."/>
            <person name="Chen H."/>
            <person name="Shinn P."/>
            <person name="Palm C.J."/>
            <person name="Southwick A.M."/>
            <person name="Wu H.C."/>
            <person name="Kim C.J."/>
            <person name="Nguyen M."/>
            <person name="Pham P.K."/>
            <person name="Cheuk R.F."/>
            <person name="Karlin-Newmann G."/>
            <person name="Liu S.X."/>
            <person name="Lam B."/>
            <person name="Sakano H."/>
            <person name="Wu T."/>
            <person name="Yu G."/>
            <person name="Miranda M."/>
            <person name="Quach H.L."/>
            <person name="Tripp M."/>
            <person name="Chang C.H."/>
            <person name="Lee J.M."/>
            <person name="Toriumi M.J."/>
            <person name="Chan M.M."/>
            <person name="Tang C.C."/>
            <person name="Onodera C.S."/>
            <person name="Deng J.M."/>
            <person name="Akiyama K."/>
            <person name="Ansari Y."/>
            <person name="Arakawa T."/>
            <person name="Banh J."/>
            <person name="Banno F."/>
            <person name="Bowser L."/>
            <person name="Brooks S.Y."/>
            <person name="Carninci P."/>
            <person name="Chao Q."/>
            <person name="Choy N."/>
            <person name="Enju A."/>
            <person name="Goldsmith A.D."/>
            <person name="Gurjal M."/>
            <person name="Hansen N.F."/>
            <person name="Hayashizaki Y."/>
            <person name="Johnson-Hopson C."/>
            <person name="Hsuan V.W."/>
            <person name="Iida K."/>
            <person name="Karnes M."/>
            <person name="Khan S."/>
            <person name="Koesema E."/>
            <person name="Ishida J."/>
            <person name="Jiang P.X."/>
            <person name="Jones T."/>
            <person name="Kawai J."/>
            <person name="Kamiya A."/>
            <person name="Meyers C."/>
            <person name="Nakajima M."/>
            <person name="Narusaka M."/>
            <person name="Seki M."/>
            <person name="Sakurai T."/>
            <person name="Satou M."/>
            <person name="Tamse R."/>
            <person name="Vaysberg M."/>
            <person name="Wallender E.K."/>
            <person name="Wong C."/>
            <person name="Yamamura Y."/>
            <person name="Yuan S."/>
            <person name="Shinozaki K."/>
            <person name="Davis R.W."/>
            <person name="Theologis A."/>
            <person name="Ecker J.R."/>
        </authorList>
    </citation>
    <scope>NUCLEOTIDE SEQUENCE [LARGE SCALE MRNA]</scope>
    <source>
        <strain>cv. Columbia</strain>
    </source>
</reference>
<reference key="6">
    <citation type="submission" date="2006-07" db="EMBL/GenBank/DDBJ databases">
        <title>Large-scale analysis of RIKEN Arabidopsis full-length (RAFL) cDNAs.</title>
        <authorList>
            <person name="Totoki Y."/>
            <person name="Seki M."/>
            <person name="Ishida J."/>
            <person name="Nakajima M."/>
            <person name="Enju A."/>
            <person name="Kamiya A."/>
            <person name="Narusaka M."/>
            <person name="Shin-i T."/>
            <person name="Nakagawa M."/>
            <person name="Sakamoto N."/>
            <person name="Oishi K."/>
            <person name="Kohara Y."/>
            <person name="Kobayashi M."/>
            <person name="Toyoda A."/>
            <person name="Sakaki Y."/>
            <person name="Sakurai T."/>
            <person name="Iida K."/>
            <person name="Akiyama K."/>
            <person name="Satou M."/>
            <person name="Toyoda T."/>
            <person name="Konagaya A."/>
            <person name="Carninci P."/>
            <person name="Kawai J."/>
            <person name="Hayashizaki Y."/>
            <person name="Shinozaki K."/>
        </authorList>
    </citation>
    <scope>NUCLEOTIDE SEQUENCE [LARGE SCALE MRNA] OF 1-365</scope>
    <source>
        <strain>cv. Columbia</strain>
    </source>
</reference>
<name>FK133_ARATH</name>
<protein>
    <recommendedName>
        <fullName>F-box/kelch-repeat protein At4g14905</fullName>
    </recommendedName>
</protein>